<accession>O83284</accession>
<gene>
    <name type="ordered locus">TP_0260</name>
</gene>
<proteinExistence type="predicted"/>
<keyword id="KW-0472">Membrane</keyword>
<keyword id="KW-1185">Reference proteome</keyword>
<keyword id="KW-0812">Transmembrane</keyword>
<keyword id="KW-1133">Transmembrane helix</keyword>
<dbReference type="EMBL" id="AE000520">
    <property type="protein sequence ID" value="AAC65253.1"/>
    <property type="molecule type" value="Genomic_DNA"/>
</dbReference>
<dbReference type="PIR" id="A71347">
    <property type="entry name" value="A71347"/>
</dbReference>
<dbReference type="RefSeq" id="WP_010881709.1">
    <property type="nucleotide sequence ID" value="NC_021490.2"/>
</dbReference>
<dbReference type="IntAct" id="O83284">
    <property type="interactions" value="11"/>
</dbReference>
<dbReference type="STRING" id="243276.TP_0260"/>
<dbReference type="EnsemblBacteria" id="AAC65253">
    <property type="protein sequence ID" value="AAC65253"/>
    <property type="gene ID" value="TP_0260"/>
</dbReference>
<dbReference type="KEGG" id="tpa:TP_0260"/>
<dbReference type="KEGG" id="tpw:TPANIC_0260"/>
<dbReference type="eggNOG" id="ENOG5033XG8">
    <property type="taxonomic scope" value="Bacteria"/>
</dbReference>
<dbReference type="HOGENOM" id="CLU_628383_0_0_12"/>
<dbReference type="OrthoDB" id="350202at2"/>
<dbReference type="Proteomes" id="UP000000811">
    <property type="component" value="Chromosome"/>
</dbReference>
<dbReference type="GO" id="GO:0016020">
    <property type="term" value="C:membrane"/>
    <property type="evidence" value="ECO:0007669"/>
    <property type="project" value="UniProtKB-SubCell"/>
</dbReference>
<dbReference type="Gene3D" id="2.30.30.40">
    <property type="entry name" value="SH3 Domains"/>
    <property type="match status" value="1"/>
</dbReference>
<dbReference type="InterPro" id="IPR003646">
    <property type="entry name" value="SH3-like_bac-type"/>
</dbReference>
<dbReference type="Pfam" id="PF08239">
    <property type="entry name" value="SH3_3"/>
    <property type="match status" value="1"/>
</dbReference>
<dbReference type="PROSITE" id="PS51257">
    <property type="entry name" value="PROKAR_LIPOPROTEIN"/>
    <property type="match status" value="1"/>
</dbReference>
<dbReference type="PROSITE" id="PS51781">
    <property type="entry name" value="SH3B"/>
    <property type="match status" value="1"/>
</dbReference>
<comment type="subcellular location">
    <subcellularLocation>
        <location evidence="3">Membrane</location>
        <topology evidence="3">Single-pass membrane protein</topology>
    </subcellularLocation>
</comment>
<feature type="chain" id="PRO_0000202220" description="Uncharacterized protein TP_0260">
    <location>
        <begin position="1"/>
        <end position="448"/>
    </location>
</feature>
<feature type="transmembrane region" description="Helical" evidence="1">
    <location>
        <begin position="19"/>
        <end position="41"/>
    </location>
</feature>
<feature type="domain" description="SH3b" evidence="2">
    <location>
        <begin position="105"/>
        <end position="181"/>
    </location>
</feature>
<reference key="1">
    <citation type="journal article" date="1998" name="Science">
        <title>Complete genome sequence of Treponema pallidum, the syphilis spirochete.</title>
        <authorList>
            <person name="Fraser C.M."/>
            <person name="Norris S.J."/>
            <person name="Weinstock G.M."/>
            <person name="White O."/>
            <person name="Sutton G.G."/>
            <person name="Dodson R.J."/>
            <person name="Gwinn M.L."/>
            <person name="Hickey E.K."/>
            <person name="Clayton R.A."/>
            <person name="Ketchum K.A."/>
            <person name="Sodergren E."/>
            <person name="Hardham J.M."/>
            <person name="McLeod M.P."/>
            <person name="Salzberg S.L."/>
            <person name="Peterson J.D."/>
            <person name="Khalak H.G."/>
            <person name="Richardson D.L."/>
            <person name="Howell J.K."/>
            <person name="Chidambaram M."/>
            <person name="Utterback T.R."/>
            <person name="McDonald L.A."/>
            <person name="Artiach P."/>
            <person name="Bowman C."/>
            <person name="Cotton M.D."/>
            <person name="Fujii C."/>
            <person name="Garland S.A."/>
            <person name="Hatch B."/>
            <person name="Horst K."/>
            <person name="Roberts K.M."/>
            <person name="Sandusky M."/>
            <person name="Weidman J.F."/>
            <person name="Smith H.O."/>
            <person name="Venter J.C."/>
        </authorList>
    </citation>
    <scope>NUCLEOTIDE SEQUENCE [LARGE SCALE GENOMIC DNA]</scope>
    <source>
        <strain>Nichols</strain>
    </source>
</reference>
<protein>
    <recommendedName>
        <fullName>Uncharacterized protein TP_0260</fullName>
    </recommendedName>
</protein>
<sequence>MCYYRYVQVHSIWRRFCALGLLVPFLLLLFSCTNTVGYGVLQWSLPDLGLSTGDILPVYVRSNVSQVYIVEIQKKKVELPFWQLKLCRTKKEALQYAERLREYRYSYATSVLDGLPLREGPENTAPQVYRLREGQAVKLLWKGTGKAVYRGENRLEGDWFKVMTEDGTTGWCFSHGLSLFDERESRPTVRETDDLARDRDLQHVLNSAWYPEYYRTMVEQRRIDLEKMASGWGLFVGEKKGLARIELPDAHYAFPYSRLVKTGSNGYLFDGSSLSIYVRDAHTLAAQFTDEAGRLRIERFVTLEKTPEEIIAEEQLRRSALLEHVCTPGLRLHSEIYGTLSFTERNVFTWTGARALSPALIPAGAGSTGRVALRCFIDQSLKSEYEGVLSFDFDSAQEWVHFLYLRTPGGLKLEHIDSTHLKDATVLRRSVSPVVLYFAPEGHAEPQP</sequence>
<organism>
    <name type="scientific">Treponema pallidum (strain Nichols)</name>
    <dbReference type="NCBI Taxonomy" id="243276"/>
    <lineage>
        <taxon>Bacteria</taxon>
        <taxon>Pseudomonadati</taxon>
        <taxon>Spirochaetota</taxon>
        <taxon>Spirochaetia</taxon>
        <taxon>Spirochaetales</taxon>
        <taxon>Treponemataceae</taxon>
        <taxon>Treponema</taxon>
    </lineage>
</organism>
<name>Y260_TREPA</name>
<evidence type="ECO:0000255" key="1"/>
<evidence type="ECO:0000255" key="2">
    <source>
        <dbReference type="PROSITE-ProRule" id="PRU01117"/>
    </source>
</evidence>
<evidence type="ECO:0000305" key="3"/>